<comment type="function">
    <text evidence="1">Component of the cytochrome c oxidase, the last enzyme in the mitochondrial electron transport chain which drives oxidative phosphorylation. The respiratory chain contains 3 multisubunit complexes succinate dehydrogenase (complex II, CII), ubiquinol-cytochrome c oxidoreductase (cytochrome b-c1 complex, complex III, CIII) and cytochrome c oxidase (complex IV, CIV), that cooperate to transfer electrons derived from NADH and succinate to molecular oxygen, creating an electrochemical gradient over the inner membrane that drives transmembrane transport and the ATP synthase. Cytochrome c oxidase is the component of the respiratory chain that catalyzes the reduction of oxygen to water. Electrons originating from reduced cytochrome c in the intermembrane space (IMS) are transferred via the dinuclear copper A center (CU(A)) of subunit 2 and heme A of subunit 1 to the active site in subunit 1, a binuclear center (BNC) formed by heme A3 and copper B (CU(B)). The BNC reduces molecular oxygen to 2 water molecules using 4 electrons from cytochrome c in the IMS and 4 protons from the mitochondrial matrix.</text>
</comment>
<comment type="catalytic activity">
    <reaction evidence="1">
        <text>4 Fe(II)-[cytochrome c] + O2 + 8 H(+)(in) = 4 Fe(III)-[cytochrome c] + 2 H2O + 4 H(+)(out)</text>
        <dbReference type="Rhea" id="RHEA:11436"/>
        <dbReference type="Rhea" id="RHEA-COMP:10350"/>
        <dbReference type="Rhea" id="RHEA-COMP:14399"/>
        <dbReference type="ChEBI" id="CHEBI:15377"/>
        <dbReference type="ChEBI" id="CHEBI:15378"/>
        <dbReference type="ChEBI" id="CHEBI:15379"/>
        <dbReference type="ChEBI" id="CHEBI:29033"/>
        <dbReference type="ChEBI" id="CHEBI:29034"/>
        <dbReference type="EC" id="7.1.1.9"/>
    </reaction>
    <physiologicalReaction direction="left-to-right" evidence="1">
        <dbReference type="Rhea" id="RHEA:11437"/>
    </physiologicalReaction>
</comment>
<comment type="subunit">
    <text evidence="1">Component of the cytochrome c oxidase (complex IV, CIV), a multisubunit enzyme composed of a catalytic core of 3 subunits and several supernumerary subunits. The complex exists as a monomer or a dimer and forms supercomplexes (SCs) in the inner mitochondrial membrane with ubiquinol-cytochrome c oxidoreductase (cytochrome b-c1 complex, complex III, CIII).</text>
</comment>
<comment type="subcellular location">
    <subcellularLocation>
        <location evidence="1">Mitochondrion inner membrane</location>
        <topology evidence="1">Multi-pass membrane protein</topology>
    </subcellularLocation>
</comment>
<comment type="similarity">
    <text evidence="3">Belongs to the cytochrome c oxidase subunit 3 family.</text>
</comment>
<reference key="1">
    <citation type="submission" date="1996-03" db="EMBL/GenBank/DDBJ databases">
        <authorList>
            <person name="Ikeda T.M."/>
            <person name="Tsunewaki K."/>
        </authorList>
    </citation>
    <scope>NUCLEOTIDE SEQUENCE [GENOMIC DNA]</scope>
</reference>
<dbReference type="EC" id="7.1.1.9"/>
<dbReference type="EMBL" id="U46766">
    <property type="protein sequence ID" value="AAA91211.1"/>
    <property type="molecule type" value="Genomic_DNA"/>
</dbReference>
<dbReference type="EMBL" id="U46765">
    <property type="protein sequence ID" value="AAA91210.1"/>
    <property type="molecule type" value="Genomic_DNA"/>
</dbReference>
<dbReference type="SMR" id="Q36952"/>
<dbReference type="GO" id="GO:0005743">
    <property type="term" value="C:mitochondrial inner membrane"/>
    <property type="evidence" value="ECO:0007669"/>
    <property type="project" value="UniProtKB-SubCell"/>
</dbReference>
<dbReference type="GO" id="GO:0004129">
    <property type="term" value="F:cytochrome-c oxidase activity"/>
    <property type="evidence" value="ECO:0007669"/>
    <property type="project" value="UniProtKB-EC"/>
</dbReference>
<dbReference type="GO" id="GO:0006123">
    <property type="term" value="P:mitochondrial electron transport, cytochrome c to oxygen"/>
    <property type="evidence" value="ECO:0007669"/>
    <property type="project" value="TreeGrafter"/>
</dbReference>
<dbReference type="CDD" id="cd01665">
    <property type="entry name" value="Cyt_c_Oxidase_III"/>
    <property type="match status" value="1"/>
</dbReference>
<dbReference type="FunFam" id="1.10.287.70:FF:000075">
    <property type="entry name" value="Cytochrome c oxidase subunit 3"/>
    <property type="match status" value="1"/>
</dbReference>
<dbReference type="FunFam" id="1.20.120.80:FF:000002">
    <property type="entry name" value="Cytochrome c oxidase subunit 3"/>
    <property type="match status" value="1"/>
</dbReference>
<dbReference type="Gene3D" id="1.10.287.70">
    <property type="match status" value="1"/>
</dbReference>
<dbReference type="Gene3D" id="1.20.120.80">
    <property type="entry name" value="Cytochrome c oxidase, subunit III, four-helix bundle"/>
    <property type="match status" value="1"/>
</dbReference>
<dbReference type="InterPro" id="IPR024791">
    <property type="entry name" value="Cyt_c/ubiquinol_Oxase_su3"/>
</dbReference>
<dbReference type="InterPro" id="IPR033945">
    <property type="entry name" value="Cyt_c_oxase_su3_dom"/>
</dbReference>
<dbReference type="InterPro" id="IPR000298">
    <property type="entry name" value="Cyt_c_oxidase-like_su3"/>
</dbReference>
<dbReference type="InterPro" id="IPR035973">
    <property type="entry name" value="Cyt_c_oxidase_su3-like_sf"/>
</dbReference>
<dbReference type="InterPro" id="IPR013833">
    <property type="entry name" value="Cyt_c_oxidase_su3_a-hlx"/>
</dbReference>
<dbReference type="PANTHER" id="PTHR11403:SF7">
    <property type="entry name" value="CYTOCHROME C OXIDASE SUBUNIT 3"/>
    <property type="match status" value="1"/>
</dbReference>
<dbReference type="PANTHER" id="PTHR11403">
    <property type="entry name" value="CYTOCHROME C OXIDASE SUBUNIT III"/>
    <property type="match status" value="1"/>
</dbReference>
<dbReference type="Pfam" id="PF00510">
    <property type="entry name" value="COX3"/>
    <property type="match status" value="1"/>
</dbReference>
<dbReference type="SUPFAM" id="SSF81452">
    <property type="entry name" value="Cytochrome c oxidase subunit III-like"/>
    <property type="match status" value="1"/>
</dbReference>
<dbReference type="PROSITE" id="PS50253">
    <property type="entry name" value="COX3"/>
    <property type="match status" value="1"/>
</dbReference>
<organism>
    <name type="scientific">Aegilops columnaris</name>
    <name type="common">Goatgrass</name>
    <name type="synonym">Triticum columnare</name>
    <dbReference type="NCBI Taxonomy" id="4493"/>
    <lineage>
        <taxon>Eukaryota</taxon>
        <taxon>Viridiplantae</taxon>
        <taxon>Streptophyta</taxon>
        <taxon>Embryophyta</taxon>
        <taxon>Tracheophyta</taxon>
        <taxon>Spermatophyta</taxon>
        <taxon>Magnoliopsida</taxon>
        <taxon>Liliopsida</taxon>
        <taxon>Poales</taxon>
        <taxon>Poaceae</taxon>
        <taxon>BOP clade</taxon>
        <taxon>Pooideae</taxon>
        <taxon>Triticodae</taxon>
        <taxon>Triticeae</taxon>
        <taxon>Triticinae</taxon>
        <taxon>Aegilops</taxon>
    </lineage>
</organism>
<evidence type="ECO:0000250" key="1">
    <source>
        <dbReference type="UniProtKB" id="P00420"/>
    </source>
</evidence>
<evidence type="ECO:0000255" key="2"/>
<evidence type="ECO:0000305" key="3"/>
<accession>Q36952</accession>
<geneLocation type="mitochondrion"/>
<name>COX3_AEGCO</name>
<gene>
    <name type="primary">COX3</name>
</gene>
<keyword id="KW-0472">Membrane</keyword>
<keyword id="KW-0496">Mitochondrion</keyword>
<keyword id="KW-0999">Mitochondrion inner membrane</keyword>
<keyword id="KW-1278">Translocase</keyword>
<keyword id="KW-0812">Transmembrane</keyword>
<keyword id="KW-1133">Transmembrane helix</keyword>
<feature type="chain" id="PRO_0000183727" description="Cytochrome c oxidase subunit 3">
    <location>
        <begin position="1"/>
        <end position="265"/>
    </location>
</feature>
<feature type="transmembrane region" description="Helical" evidence="2">
    <location>
        <begin position="16"/>
        <end position="36"/>
    </location>
</feature>
<feature type="transmembrane region" description="Helical" evidence="2">
    <location>
        <begin position="41"/>
        <end position="61"/>
    </location>
</feature>
<feature type="transmembrane region" description="Helical" evidence="2">
    <location>
        <begin position="84"/>
        <end position="104"/>
    </location>
</feature>
<feature type="transmembrane region" description="Helical" evidence="2">
    <location>
        <begin position="162"/>
        <end position="182"/>
    </location>
</feature>
<feature type="transmembrane region" description="Helical" evidence="2">
    <location>
        <begin position="200"/>
        <end position="220"/>
    </location>
</feature>
<feature type="transmembrane region" description="Helical" evidence="2">
    <location>
        <begin position="245"/>
        <end position="265"/>
    </location>
</feature>
<protein>
    <recommendedName>
        <fullName>Cytochrome c oxidase subunit 3</fullName>
        <ecNumber>7.1.1.9</ecNumber>
    </recommendedName>
    <alternativeName>
        <fullName>Cytochrome c oxidase polypeptide III</fullName>
    </alternativeName>
</protein>
<sequence length="265" mass="29326">MIESQRHSYHLVDPSPWPISGSLGALATTVGGVMYMHSFQGGATLLSLGLIFLLYTMFVWWRDVLRESTLEGHHTKAVQLGPRYGSILFIVSEVMFLFAFFWASSHSSLAPTVEIGGIWPPKGIGVLDPWEIPLLNTPILPSSGAAVTWAHHAILAGKEKRAVYALVATVSLALVSTGFQGMEYYQAPSTISDSIYGSTFFLATGFHGFHVIIGTLFLIVCGIRQYLGLMTKKHHVGFEAAAWYWHFVDVVRLFPFVSIYWWGGI</sequence>
<proteinExistence type="inferred from homology"/>